<feature type="signal peptide" evidence="2">
    <location>
        <begin position="1"/>
        <end position="18"/>
    </location>
</feature>
<feature type="propeptide" id="PRO_0000295832" evidence="1">
    <location>
        <begin position="19"/>
        <end position="24"/>
    </location>
</feature>
<feature type="chain" id="PRO_5000061229" description="Snake venom serine protease homolog KN7">
    <location>
        <begin position="25"/>
        <end position="260"/>
    </location>
</feature>
<feature type="domain" description="Peptidase S1" evidence="3">
    <location>
        <begin position="25"/>
        <end position="251"/>
    </location>
</feature>
<feature type="glycosylation site" description="N-linked (GlcNAc...) asparagine" evidence="2">
    <location>
        <position position="83"/>
    </location>
</feature>
<feature type="glycosylation site" description="N-linked (GlcNAc...) asparagine" evidence="2">
    <location>
        <position position="123"/>
    </location>
</feature>
<feature type="glycosylation site" description="N-linked (GlcNAc...) asparagine" evidence="2">
    <location>
        <position position="124"/>
    </location>
</feature>
<feature type="disulfide bond" evidence="3">
    <location>
        <begin position="31"/>
        <end position="165"/>
    </location>
</feature>
<feature type="disulfide bond" evidence="3">
    <location>
        <begin position="52"/>
        <end position="68"/>
    </location>
</feature>
<feature type="disulfide bond" evidence="3">
    <location>
        <begin position="100"/>
        <end position="258"/>
    </location>
</feature>
<feature type="disulfide bond" evidence="3">
    <location>
        <begin position="144"/>
        <end position="212"/>
    </location>
</feature>
<feature type="disulfide bond" evidence="3">
    <location>
        <begin position="176"/>
        <end position="191"/>
    </location>
</feature>
<feature type="disulfide bond" evidence="3">
    <location>
        <begin position="202"/>
        <end position="227"/>
    </location>
</feature>
<reference key="1">
    <citation type="submission" date="2001-06" db="EMBL/GenBank/DDBJ databases">
        <title>Identification of geographic variations and cloning of venom proteins of Trimeresurus stejnegeri: serine proteases and phospholipases.</title>
        <authorList>
            <person name="Tsai I.-H."/>
            <person name="Wang Y.-M."/>
        </authorList>
    </citation>
    <scope>NUCLEOTIDE SEQUENCE [MRNA]</scope>
    <source>
        <tissue>Venom gland</tissue>
    </source>
</reference>
<evidence type="ECO:0000250" key="1"/>
<evidence type="ECO:0000255" key="2"/>
<evidence type="ECO:0000255" key="3">
    <source>
        <dbReference type="PROSITE-ProRule" id="PRU00274"/>
    </source>
</evidence>
<evidence type="ECO:0000305" key="4"/>
<evidence type="ECO:0000305" key="5">
    <source ref="1"/>
</evidence>
<sequence length="260" mass="28721">MVLIRVLANLLILQLSYAQKSSELIIGGDECNINEHRFLVALYTFRSRRFHCGGTLINQEWVLSAARCDRKNIRIKLGMHSTNVTNEDVQTRVPKEKFFCLSSKTYTKWNKDIMLIRLKRPVNNSTHIAPVSLPSNPPSLGLVCRVMGWGTISATKETHPDVPHCANINILDYSVCRAAYARLPATSRTLCAGILEGGKDTCHGDSGGPLICNGQVQGIVSWGGHPCGQPRKPGLYTKVFDHLDWIKSIIAGNKDATCPP</sequence>
<name>VSPH7_TRIST</name>
<organism>
    <name type="scientific">Trimeresurus stejnegeri</name>
    <name type="common">Chinese green tree viper</name>
    <name type="synonym">Viridovipera stejnegeri</name>
    <dbReference type="NCBI Taxonomy" id="39682"/>
    <lineage>
        <taxon>Eukaryota</taxon>
        <taxon>Metazoa</taxon>
        <taxon>Chordata</taxon>
        <taxon>Craniata</taxon>
        <taxon>Vertebrata</taxon>
        <taxon>Euteleostomi</taxon>
        <taxon>Lepidosauria</taxon>
        <taxon>Squamata</taxon>
        <taxon>Bifurcata</taxon>
        <taxon>Unidentata</taxon>
        <taxon>Episquamata</taxon>
        <taxon>Toxicofera</taxon>
        <taxon>Serpentes</taxon>
        <taxon>Colubroidea</taxon>
        <taxon>Viperidae</taxon>
        <taxon>Crotalinae</taxon>
        <taxon>Trimeresurus</taxon>
    </lineage>
</organism>
<protein>
    <recommendedName>
        <fullName>Snake venom serine protease homolog KN7</fullName>
    </recommendedName>
    <alternativeName>
        <fullName>Serine proteinase-like protein KN7</fullName>
    </alternativeName>
</protein>
<dbReference type="EMBL" id="AF395777">
    <property type="protein sequence ID" value="AAQ02907.1"/>
    <property type="molecule type" value="mRNA"/>
</dbReference>
<dbReference type="SMR" id="Q71QI0"/>
<dbReference type="GO" id="GO:0005576">
    <property type="term" value="C:extracellular region"/>
    <property type="evidence" value="ECO:0007669"/>
    <property type="project" value="UniProtKB-SubCell"/>
</dbReference>
<dbReference type="GO" id="GO:0030141">
    <property type="term" value="C:secretory granule"/>
    <property type="evidence" value="ECO:0007669"/>
    <property type="project" value="TreeGrafter"/>
</dbReference>
<dbReference type="GO" id="GO:0004252">
    <property type="term" value="F:serine-type endopeptidase activity"/>
    <property type="evidence" value="ECO:0007669"/>
    <property type="project" value="InterPro"/>
</dbReference>
<dbReference type="GO" id="GO:0090729">
    <property type="term" value="F:toxin activity"/>
    <property type="evidence" value="ECO:0007669"/>
    <property type="project" value="UniProtKB-KW"/>
</dbReference>
<dbReference type="GO" id="GO:0006508">
    <property type="term" value="P:proteolysis"/>
    <property type="evidence" value="ECO:0007669"/>
    <property type="project" value="InterPro"/>
</dbReference>
<dbReference type="CDD" id="cd00190">
    <property type="entry name" value="Tryp_SPc"/>
    <property type="match status" value="1"/>
</dbReference>
<dbReference type="FunFam" id="2.40.10.10:FF:000158">
    <property type="entry name" value="Thrombin-like enzyme saxthrombin"/>
    <property type="match status" value="1"/>
</dbReference>
<dbReference type="FunFam" id="2.40.10.10:FF:000153">
    <property type="entry name" value="Venom plasminogen activator TSV-PA"/>
    <property type="match status" value="1"/>
</dbReference>
<dbReference type="Gene3D" id="2.40.10.10">
    <property type="entry name" value="Trypsin-like serine proteases"/>
    <property type="match status" value="2"/>
</dbReference>
<dbReference type="InterPro" id="IPR009003">
    <property type="entry name" value="Peptidase_S1_PA"/>
</dbReference>
<dbReference type="InterPro" id="IPR043504">
    <property type="entry name" value="Peptidase_S1_PA_chymotrypsin"/>
</dbReference>
<dbReference type="InterPro" id="IPR001314">
    <property type="entry name" value="Peptidase_S1A"/>
</dbReference>
<dbReference type="InterPro" id="IPR001254">
    <property type="entry name" value="Trypsin_dom"/>
</dbReference>
<dbReference type="InterPro" id="IPR033116">
    <property type="entry name" value="TRYPSIN_SER"/>
</dbReference>
<dbReference type="PANTHER" id="PTHR24271:SF47">
    <property type="entry name" value="KALLIKREIN-1"/>
    <property type="match status" value="1"/>
</dbReference>
<dbReference type="PANTHER" id="PTHR24271">
    <property type="entry name" value="KALLIKREIN-RELATED"/>
    <property type="match status" value="1"/>
</dbReference>
<dbReference type="Pfam" id="PF00089">
    <property type="entry name" value="Trypsin"/>
    <property type="match status" value="1"/>
</dbReference>
<dbReference type="PRINTS" id="PR00722">
    <property type="entry name" value="CHYMOTRYPSIN"/>
</dbReference>
<dbReference type="SMART" id="SM00020">
    <property type="entry name" value="Tryp_SPc"/>
    <property type="match status" value="1"/>
</dbReference>
<dbReference type="SUPFAM" id="SSF50494">
    <property type="entry name" value="Trypsin-like serine proteases"/>
    <property type="match status" value="1"/>
</dbReference>
<dbReference type="PROSITE" id="PS50240">
    <property type="entry name" value="TRYPSIN_DOM"/>
    <property type="match status" value="1"/>
</dbReference>
<dbReference type="PROSITE" id="PS00135">
    <property type="entry name" value="TRYPSIN_SER"/>
    <property type="match status" value="1"/>
</dbReference>
<comment type="function">
    <text evidence="4">Snake venom serine protease homolog that may act in the hemostasis system of the prey.</text>
</comment>
<comment type="subcellular location">
    <subcellularLocation>
        <location evidence="5">Secreted</location>
    </subcellularLocation>
</comment>
<comment type="tissue specificity">
    <text evidence="5">Expressed by the venom gland.</text>
</comment>
<comment type="similarity">
    <text evidence="4">Belongs to the peptidase S1 family. Snake venom subfamily.</text>
</comment>
<comment type="caution">
    <text evidence="4">Lacks the conserved His at position 67, which is expected to be an active site residue.</text>
</comment>
<keyword id="KW-1015">Disulfide bond</keyword>
<keyword id="KW-0325">Glycoprotein</keyword>
<keyword id="KW-1199">Hemostasis impairing toxin</keyword>
<keyword id="KW-0964">Secreted</keyword>
<keyword id="KW-0721">Serine protease homolog</keyword>
<keyword id="KW-0732">Signal</keyword>
<keyword id="KW-0800">Toxin</keyword>
<proteinExistence type="evidence at transcript level"/>
<accession>Q71QI0</accession>